<protein>
    <recommendedName>
        <fullName evidence="1">Ribosome modulation factor</fullName>
        <shortName evidence="1">RMF</shortName>
    </recommendedName>
</protein>
<accession>Q0VQU6</accession>
<proteinExistence type="inferred from homology"/>
<sequence length="68" mass="7717">MKRQKRNKDDRAYNRGYNAGLDGKSREDCPFGTLQARTNWMGGWREGRTDFAHGMLGVASIQNLKNIG</sequence>
<feature type="chain" id="PRO_0000416467" description="Ribosome modulation factor">
    <location>
        <begin position="1"/>
        <end position="68"/>
    </location>
</feature>
<organism>
    <name type="scientific">Alcanivorax borkumensis (strain ATCC 700651 / DSM 11573 / NCIMB 13689 / SK2)</name>
    <dbReference type="NCBI Taxonomy" id="393595"/>
    <lineage>
        <taxon>Bacteria</taxon>
        <taxon>Pseudomonadati</taxon>
        <taxon>Pseudomonadota</taxon>
        <taxon>Gammaproteobacteria</taxon>
        <taxon>Oceanospirillales</taxon>
        <taxon>Alcanivoracaceae</taxon>
        <taxon>Alcanivorax</taxon>
    </lineage>
</organism>
<reference key="1">
    <citation type="journal article" date="2006" name="Nat. Biotechnol.">
        <title>Genome sequence of the ubiquitous hydrocarbon-degrading marine bacterium Alcanivorax borkumensis.</title>
        <authorList>
            <person name="Schneiker S."/>
            <person name="Martins dos Santos V.A.P."/>
            <person name="Bartels D."/>
            <person name="Bekel T."/>
            <person name="Brecht M."/>
            <person name="Buhrmester J."/>
            <person name="Chernikova T.N."/>
            <person name="Denaro R."/>
            <person name="Ferrer M."/>
            <person name="Gertler C."/>
            <person name="Goesmann A."/>
            <person name="Golyshina O.V."/>
            <person name="Kaminski F."/>
            <person name="Khachane A.N."/>
            <person name="Lang S."/>
            <person name="Linke B."/>
            <person name="McHardy A.C."/>
            <person name="Meyer F."/>
            <person name="Nechitaylo T."/>
            <person name="Puehler A."/>
            <person name="Regenhardt D."/>
            <person name="Rupp O."/>
            <person name="Sabirova J.S."/>
            <person name="Selbitschka W."/>
            <person name="Yakimov M.M."/>
            <person name="Timmis K.N."/>
            <person name="Vorhoelter F.-J."/>
            <person name="Weidner S."/>
            <person name="Kaiser O."/>
            <person name="Golyshin P.N."/>
        </authorList>
    </citation>
    <scope>NUCLEOTIDE SEQUENCE [LARGE SCALE GENOMIC DNA]</scope>
    <source>
        <strain>ATCC 700651 / DSM 11573 / NCIMB 13689 / SK2</strain>
    </source>
</reference>
<dbReference type="EMBL" id="AM286690">
    <property type="protein sequence ID" value="CAL16452.1"/>
    <property type="status" value="ALT_INIT"/>
    <property type="molecule type" value="Genomic_DNA"/>
</dbReference>
<dbReference type="RefSeq" id="WP_035458491.1">
    <property type="nucleotide sequence ID" value="NC_008260.1"/>
</dbReference>
<dbReference type="SMR" id="Q0VQU6"/>
<dbReference type="STRING" id="393595.ABO_1004"/>
<dbReference type="KEGG" id="abo:ABO_1004"/>
<dbReference type="eggNOG" id="COG3130">
    <property type="taxonomic scope" value="Bacteria"/>
</dbReference>
<dbReference type="HOGENOM" id="CLU_1801973_0_0_6"/>
<dbReference type="OrthoDB" id="5917763at2"/>
<dbReference type="Proteomes" id="UP000008871">
    <property type="component" value="Chromosome"/>
</dbReference>
<dbReference type="GO" id="GO:0005737">
    <property type="term" value="C:cytoplasm"/>
    <property type="evidence" value="ECO:0007669"/>
    <property type="project" value="UniProtKB-SubCell"/>
</dbReference>
<dbReference type="GO" id="GO:0006417">
    <property type="term" value="P:regulation of translation"/>
    <property type="evidence" value="ECO:0007669"/>
    <property type="project" value="UniProtKB-UniRule"/>
</dbReference>
<dbReference type="Gene3D" id="1.10.10.620">
    <property type="entry name" value="ribosome modulation factor like domain"/>
    <property type="match status" value="1"/>
</dbReference>
<dbReference type="HAMAP" id="MF_00919">
    <property type="entry name" value="RMF"/>
    <property type="match status" value="1"/>
</dbReference>
<dbReference type="InterPro" id="IPR007040">
    <property type="entry name" value="Ribosome_modulation_factor"/>
</dbReference>
<dbReference type="InterPro" id="IPR023200">
    <property type="entry name" value="RMF_sf"/>
</dbReference>
<dbReference type="NCBIfam" id="NF011162">
    <property type="entry name" value="PRK14563.1"/>
    <property type="match status" value="1"/>
</dbReference>
<dbReference type="NCBIfam" id="NF041886">
    <property type="entry name" value="Rmf_CrpP_fam"/>
    <property type="match status" value="1"/>
</dbReference>
<dbReference type="Pfam" id="PF04957">
    <property type="entry name" value="RMF"/>
    <property type="match status" value="1"/>
</dbReference>
<keyword id="KW-0963">Cytoplasm</keyword>
<keyword id="KW-1185">Reference proteome</keyword>
<keyword id="KW-0810">Translation regulation</keyword>
<name>RMF_ALCBS</name>
<comment type="function">
    <text evidence="1">During stationary phase, converts 70S ribosomes to an inactive dimeric form (100S ribosomes).</text>
</comment>
<comment type="subcellular location">
    <subcellularLocation>
        <location evidence="1">Cytoplasm</location>
    </subcellularLocation>
</comment>
<comment type="similarity">
    <text evidence="1">Belongs to the ribosome modulation factor family.</text>
</comment>
<comment type="sequence caution" evidence="2">
    <conflict type="erroneous initiation">
        <sequence resource="EMBL-CDS" id="CAL16452"/>
    </conflict>
    <text>Extended N-terminus.</text>
</comment>
<evidence type="ECO:0000255" key="1">
    <source>
        <dbReference type="HAMAP-Rule" id="MF_00919"/>
    </source>
</evidence>
<evidence type="ECO:0000305" key="2"/>
<gene>
    <name evidence="1" type="primary">rmf</name>
    <name type="ordered locus">ABO_1004</name>
</gene>